<evidence type="ECO:0000255" key="1">
    <source>
        <dbReference type="HAMAP-Rule" id="MF_04127"/>
    </source>
</evidence>
<evidence type="ECO:0000256" key="2">
    <source>
        <dbReference type="SAM" id="MobiDB-lite"/>
    </source>
</evidence>
<accession>B1NKT8</accession>
<proteinExistence type="inferred from homology"/>
<dbReference type="EMBL" id="EF583046">
    <property type="protein sequence ID" value="ABU87855.1"/>
    <property type="molecule type" value="Genomic_RNA"/>
</dbReference>
<dbReference type="SMR" id="B1NKT8"/>
<dbReference type="Proteomes" id="UP000007048">
    <property type="component" value="Genome"/>
</dbReference>
<dbReference type="GO" id="GO:0039616">
    <property type="term" value="C:T=2 icosahedral viral capsid"/>
    <property type="evidence" value="ECO:0007669"/>
    <property type="project" value="UniProtKB-UniRule"/>
</dbReference>
<dbReference type="GO" id="GO:0039625">
    <property type="term" value="C:viral inner capsid"/>
    <property type="evidence" value="ECO:0007669"/>
    <property type="project" value="UniProtKB-UniRule"/>
</dbReference>
<dbReference type="GO" id="GO:0019013">
    <property type="term" value="C:viral nucleocapsid"/>
    <property type="evidence" value="ECO:0007669"/>
    <property type="project" value="UniProtKB-UniRule"/>
</dbReference>
<dbReference type="GO" id="GO:0003723">
    <property type="term" value="F:RNA binding"/>
    <property type="evidence" value="ECO:0007669"/>
    <property type="project" value="UniProtKB-UniRule"/>
</dbReference>
<dbReference type="HAMAP" id="MF_04123">
    <property type="entry name" value="Rota_VP2"/>
    <property type="match status" value="1"/>
</dbReference>
<dbReference type="HAMAP" id="MF_04127">
    <property type="entry name" value="Rota_VP2_A"/>
    <property type="match status" value="1"/>
</dbReference>
<dbReference type="InterPro" id="IPR007779">
    <property type="entry name" value="Rotavirus_VP2"/>
</dbReference>
<dbReference type="Pfam" id="PF05087">
    <property type="entry name" value="Rota_VP2"/>
    <property type="match status" value="1"/>
</dbReference>
<keyword id="KW-0167">Capsid protein</keyword>
<keyword id="KW-1153">Inner capsid protein</keyword>
<keyword id="KW-0677">Repeat</keyword>
<keyword id="KW-0694">RNA-binding</keyword>
<keyword id="KW-1141">T=2 icosahedral capsid protein</keyword>
<keyword id="KW-0832">Ubl conjugation</keyword>
<keyword id="KW-0946">Virion</keyword>
<organismHost>
    <name type="scientific">Homo sapiens</name>
    <name type="common">Human</name>
    <dbReference type="NCBI Taxonomy" id="9606"/>
</organismHost>
<feature type="chain" id="PRO_0000368061" description="Inner capsid protein VP2">
    <location>
        <begin position="1"/>
        <end position="890"/>
    </location>
</feature>
<feature type="region of interest" description="5-fold hub; involved in the encapsidation of VP1 and VP3" evidence="1">
    <location>
        <begin position="1"/>
        <end position="88"/>
    </location>
</feature>
<feature type="region of interest" description="Disordered" evidence="2">
    <location>
        <begin position="1"/>
        <end position="46"/>
    </location>
</feature>
<feature type="region of interest" description="Hydrophobic" evidence="1">
    <location>
        <begin position="404"/>
        <end position="424"/>
    </location>
</feature>
<feature type="region of interest" description="Hydrophobic" evidence="1">
    <location>
        <begin position="432"/>
        <end position="452"/>
    </location>
</feature>
<feature type="compositionally biased region" description="Polar residues" evidence="2">
    <location>
        <begin position="28"/>
        <end position="42"/>
    </location>
</feature>
<feature type="site" description="Interaction with the intermediate capsid protein VP6" evidence="1">
    <location>
        <position position="232"/>
    </location>
</feature>
<feature type="site" description="Interaction with the intermediate capsid protein VP6" evidence="1">
    <location>
        <position position="236"/>
    </location>
</feature>
<feature type="site" description="Interaction with the intermediate capsid protein VP6" evidence="1">
    <location>
        <position position="849"/>
    </location>
</feature>
<feature type="site" description="Interaction with the intermediate capsid protein VP6" evidence="1">
    <location>
        <position position="851"/>
    </location>
</feature>
<reference key="1">
    <citation type="journal article" date="2008" name="J. Virol.">
        <title>Full genome-based classification of rotaviruses reveals a common origin between human Wa-Like and porcine rotavirus strains and human DS-1-like and bovine rotavirus strains.</title>
        <authorList>
            <person name="Matthijnssens J."/>
            <person name="Ciarlet M."/>
            <person name="Heiman E.M."/>
            <person name="Arijs I."/>
            <person name="Delbeke T."/>
            <person name="McDonald S.M."/>
            <person name="Palombo E.A."/>
            <person name="Iturriza-Gomara M."/>
            <person name="Maes P."/>
            <person name="Patton J.T."/>
            <person name="Rahman M."/>
            <person name="Van Ranst M."/>
        </authorList>
    </citation>
    <scope>NUCLEOTIDE SEQUENCE [GENOMIC RNA]</scope>
</reference>
<sequence length="890" mass="103836">MAYRKRGAKRENLPQQNERLQEKEIENNTDVTMENKNNNRKQQLSDKVLSQKEEIITDVQDDIKIADEVKKSSKEESKQLLEILKTKEDHQKEVQYEILQKTIPTFEPKESILKKIEDIRPEQAKKQMKLFRIFEPRQLPIYRANGEKELRNRWYWKLKKDTLPDGDYDVREYFLNLYDQILIEMPDYLLLKDMAVENKNSRDAGKVVDSETASICDAIFQDEETEGVIRRFIADMRQQVQADRNIVNYPSILHPIDHAFNEYFLNHQLVEPLNNEIIFNYIPERIRNDVNYILNMDMNLPSTARYIRPNLLQDRLNLHDNFESLWDTITTSNYILARSVVPDLKEKELVSTEAQIQKMSQDLQLEALTIQSETQFLAGINSQAANDCFKTLIAAMLSQRTMSLDFVTTNYMSLISGMWLLTVIPNDMFLRESLVACELAIINTIVYPAFGMQRMHYRNGDPQTPFQIAEQQIQNFQVANWLHFINNNRFRQVVIDGVLNQTLNDNIRNGQVINQLMEALMQLSRQQFPTMPVDYKRSIQRGILLLSNRLGQLVDLTRLLSYNYETLMACITMNMQHVQTLTTEKLQLTSVTSLCMLIGNTTVIPSPQTLFHYYNVNVNFHSNYNERINDAVAIITAANRLNLYQKKMKSIVEDFLKRLQIFDVPRVPDDQMYRLRDRLRLLPVERRRLDIFNLILMNMEQIERASDKIAQGVIIAYRDMQLERDEMYGFVNITRSLDGYQQINLEELMRTGDYGQITNMLLNNQPVALVGALPFVTDSSVISLIAKLDATVFAQIVKLRKVDTLKPILYKINSDSNDFYLVANYDWIPTSTTKVYKQVPQPFDFRASMHMLTSNLTFTVYSDLLSFVSADTVEPINAIAFDNMRIMNEL</sequence>
<name>VP2_ROTHT</name>
<protein>
    <recommendedName>
        <fullName evidence="1">Inner capsid protein VP2</fullName>
    </recommendedName>
</protein>
<organism>
    <name type="scientific">Rotavirus A (strain RVA/Human/United Kingdom/ST3/1975/G4P2A[6])</name>
    <name type="common">RV-A</name>
    <name type="synonym">Rotavirus A (strain St. Thomas 3)</name>
    <dbReference type="NCBI Taxonomy" id="10960"/>
    <lineage>
        <taxon>Viruses</taxon>
        <taxon>Riboviria</taxon>
        <taxon>Orthornavirae</taxon>
        <taxon>Duplornaviricota</taxon>
        <taxon>Resentoviricetes</taxon>
        <taxon>Reovirales</taxon>
        <taxon>Sedoreoviridae</taxon>
        <taxon>Rotavirus</taxon>
        <taxon>Rotavirus A</taxon>
    </lineage>
</organism>
<comment type="function">
    <text evidence="1">Inner capsid protein that self-assembles to form an icosahedral capsid with a T=2 symmetry, which consists of 120 copies of VP2, with channels at each of its five-fold vertices. This capsid constitutes the innermost concentric layer of the viral mature particle. It encapsidates the polymerase VP1, the capping enzyme VP3 and the genomic dsRNA, thereby defining the core. The innermost VP2 capsid and the intermediate VP6 capsid remain intact following cell entry to protect the dsRNA from degradation and to prevent unfavorable antiviral responses in the host cell during all the replication cycle of the virus. Nascent transcripts are transcribed within the structural confines of this double-layered particle (DLP) and are extruded through the channels formed by VP2 N-termini. VP2 is required for the replicase activity of VP1 polymerase. Probably recruits a copy of a VP1-VP3 complex, potentially along with a segment of plus-strand RNA, as a decamer of VP2 assembles. May activate the autoinhibited VP1/RNA complex to coordinate packaging and genome replication.</text>
</comment>
<comment type="subunit">
    <text evidence="1">Homodecamer; each decamer is made up of two conformers of VP2, called VP2A and VP2B. Interacts with a VP1-VP3 complex. Interacts with the intermediate capsid protein VP6. Interacts with NSP5. Interacts (via N-terminus) with NSP2.</text>
</comment>
<comment type="subcellular location">
    <subcellularLocation>
        <location evidence="1">Virion</location>
    </subcellularLocation>
    <text evidence="1">Inner capsid protein. Also found in spherical cytoplasmic structures, called virus factories, that appear early after infection and are the site of viral replication and packaging.</text>
</comment>
<comment type="domain">
    <text evidence="1">The N-terminus binds RNA. It is necessary for encapsidation of VP1 and VP3. The N-termini of 10 VP2 molecules form a cylindrical hub underneath each 5-fold axis of the inner capsid.</text>
</comment>
<comment type="PTM">
    <text evidence="1">Sumoylated with SUMO1 and SUMO2. Sumoylation of viral proteins seems to have a positive role on viral replication.</text>
</comment>
<comment type="similarity">
    <text evidence="1">Belongs to the rotavirus VP2 family.</text>
</comment>